<comment type="function">
    <text evidence="1">Involved in the binding of tRNA to the ribosomes.</text>
</comment>
<comment type="subunit">
    <text evidence="1">Part of the 30S ribosomal subunit.</text>
</comment>
<comment type="similarity">
    <text evidence="1">Belongs to the universal ribosomal protein uS10 family.</text>
</comment>
<proteinExistence type="inferred from homology"/>
<reference key="1">
    <citation type="journal article" date="2006" name="Nat. Biotechnol.">
        <title>Complete genome sequence of the entomopathogenic and metabolically versatile soil bacterium Pseudomonas entomophila.</title>
        <authorList>
            <person name="Vodovar N."/>
            <person name="Vallenet D."/>
            <person name="Cruveiller S."/>
            <person name="Rouy Z."/>
            <person name="Barbe V."/>
            <person name="Acosta C."/>
            <person name="Cattolico L."/>
            <person name="Jubin C."/>
            <person name="Lajus A."/>
            <person name="Segurens B."/>
            <person name="Vacherie B."/>
            <person name="Wincker P."/>
            <person name="Weissenbach J."/>
            <person name="Lemaitre B."/>
            <person name="Medigue C."/>
            <person name="Boccard F."/>
        </authorList>
    </citation>
    <scope>NUCLEOTIDE SEQUENCE [LARGE SCALE GENOMIC DNA]</scope>
    <source>
        <strain>L48</strain>
    </source>
</reference>
<evidence type="ECO:0000255" key="1">
    <source>
        <dbReference type="HAMAP-Rule" id="MF_00508"/>
    </source>
</evidence>
<evidence type="ECO:0000305" key="2"/>
<name>RS10_PSEE4</name>
<dbReference type="EMBL" id="CT573326">
    <property type="protein sequence ID" value="CAK13435.1"/>
    <property type="molecule type" value="Genomic_DNA"/>
</dbReference>
<dbReference type="RefSeq" id="WP_003103876.1">
    <property type="nucleotide sequence ID" value="NC_008027.1"/>
</dbReference>
<dbReference type="SMR" id="Q1IFW7"/>
<dbReference type="STRING" id="384676.PSEEN0489"/>
<dbReference type="GeneID" id="77261717"/>
<dbReference type="KEGG" id="pen:PSEEN0489"/>
<dbReference type="eggNOG" id="COG0051">
    <property type="taxonomic scope" value="Bacteria"/>
</dbReference>
<dbReference type="HOGENOM" id="CLU_122625_1_3_6"/>
<dbReference type="OrthoDB" id="9804464at2"/>
<dbReference type="Proteomes" id="UP000000658">
    <property type="component" value="Chromosome"/>
</dbReference>
<dbReference type="GO" id="GO:1990904">
    <property type="term" value="C:ribonucleoprotein complex"/>
    <property type="evidence" value="ECO:0007669"/>
    <property type="project" value="UniProtKB-KW"/>
</dbReference>
<dbReference type="GO" id="GO:0005840">
    <property type="term" value="C:ribosome"/>
    <property type="evidence" value="ECO:0007669"/>
    <property type="project" value="UniProtKB-KW"/>
</dbReference>
<dbReference type="GO" id="GO:0003735">
    <property type="term" value="F:structural constituent of ribosome"/>
    <property type="evidence" value="ECO:0007669"/>
    <property type="project" value="InterPro"/>
</dbReference>
<dbReference type="GO" id="GO:0000049">
    <property type="term" value="F:tRNA binding"/>
    <property type="evidence" value="ECO:0007669"/>
    <property type="project" value="UniProtKB-UniRule"/>
</dbReference>
<dbReference type="GO" id="GO:0006412">
    <property type="term" value="P:translation"/>
    <property type="evidence" value="ECO:0007669"/>
    <property type="project" value="UniProtKB-UniRule"/>
</dbReference>
<dbReference type="FunFam" id="3.30.70.600:FF:000001">
    <property type="entry name" value="30S ribosomal protein S10"/>
    <property type="match status" value="1"/>
</dbReference>
<dbReference type="Gene3D" id="3.30.70.600">
    <property type="entry name" value="Ribosomal protein S10 domain"/>
    <property type="match status" value="1"/>
</dbReference>
<dbReference type="HAMAP" id="MF_00508">
    <property type="entry name" value="Ribosomal_uS10"/>
    <property type="match status" value="1"/>
</dbReference>
<dbReference type="InterPro" id="IPR001848">
    <property type="entry name" value="Ribosomal_uS10"/>
</dbReference>
<dbReference type="InterPro" id="IPR018268">
    <property type="entry name" value="Ribosomal_uS10_CS"/>
</dbReference>
<dbReference type="InterPro" id="IPR027486">
    <property type="entry name" value="Ribosomal_uS10_dom"/>
</dbReference>
<dbReference type="InterPro" id="IPR036838">
    <property type="entry name" value="Ribosomal_uS10_dom_sf"/>
</dbReference>
<dbReference type="NCBIfam" id="NF001861">
    <property type="entry name" value="PRK00596.1"/>
    <property type="match status" value="1"/>
</dbReference>
<dbReference type="NCBIfam" id="TIGR01049">
    <property type="entry name" value="rpsJ_bact"/>
    <property type="match status" value="1"/>
</dbReference>
<dbReference type="PANTHER" id="PTHR11700">
    <property type="entry name" value="30S RIBOSOMAL PROTEIN S10 FAMILY MEMBER"/>
    <property type="match status" value="1"/>
</dbReference>
<dbReference type="Pfam" id="PF00338">
    <property type="entry name" value="Ribosomal_S10"/>
    <property type="match status" value="1"/>
</dbReference>
<dbReference type="PRINTS" id="PR00971">
    <property type="entry name" value="RIBOSOMALS10"/>
</dbReference>
<dbReference type="SMART" id="SM01403">
    <property type="entry name" value="Ribosomal_S10"/>
    <property type="match status" value="1"/>
</dbReference>
<dbReference type="SUPFAM" id="SSF54999">
    <property type="entry name" value="Ribosomal protein S10"/>
    <property type="match status" value="1"/>
</dbReference>
<dbReference type="PROSITE" id="PS00361">
    <property type="entry name" value="RIBOSOMAL_S10"/>
    <property type="match status" value="1"/>
</dbReference>
<organism>
    <name type="scientific">Pseudomonas entomophila (strain L48)</name>
    <dbReference type="NCBI Taxonomy" id="384676"/>
    <lineage>
        <taxon>Bacteria</taxon>
        <taxon>Pseudomonadati</taxon>
        <taxon>Pseudomonadota</taxon>
        <taxon>Gammaproteobacteria</taxon>
        <taxon>Pseudomonadales</taxon>
        <taxon>Pseudomonadaceae</taxon>
        <taxon>Pseudomonas</taxon>
    </lineage>
</organism>
<protein>
    <recommendedName>
        <fullName evidence="1">Small ribosomal subunit protein uS10</fullName>
    </recommendedName>
    <alternativeName>
        <fullName evidence="2">30S ribosomal protein S10</fullName>
    </alternativeName>
</protein>
<accession>Q1IFW7</accession>
<sequence length="103" mass="11767">MQNQQIRIRLKAFDHRLIDQSTQEIVETAKRTGAQVRGPIPLPTRKERFTVLISPHVNKDARDQYEIRTHKRVLDIVQPTDKTVDALMKLDLAAGVEVQISLG</sequence>
<feature type="chain" id="PRO_1000015086" description="Small ribosomal subunit protein uS10">
    <location>
        <begin position="1"/>
        <end position="103"/>
    </location>
</feature>
<gene>
    <name evidence="1" type="primary">rpsJ</name>
    <name type="ordered locus">PSEEN0489</name>
</gene>
<keyword id="KW-0687">Ribonucleoprotein</keyword>
<keyword id="KW-0689">Ribosomal protein</keyword>